<dbReference type="EMBL" id="AE008691">
    <property type="protein sequence ID" value="AAM25025.1"/>
    <property type="molecule type" value="Genomic_DNA"/>
</dbReference>
<dbReference type="RefSeq" id="WP_009611021.1">
    <property type="nucleotide sequence ID" value="NC_003869.1"/>
</dbReference>
<dbReference type="SMR" id="Q8R8Z8"/>
<dbReference type="STRING" id="273068.TTE1834"/>
<dbReference type="KEGG" id="tte:TTE1834"/>
<dbReference type="eggNOG" id="COG1660">
    <property type="taxonomic scope" value="Bacteria"/>
</dbReference>
<dbReference type="HOGENOM" id="CLU_059558_0_0_9"/>
<dbReference type="OrthoDB" id="9784461at2"/>
<dbReference type="Proteomes" id="UP000000555">
    <property type="component" value="Chromosome"/>
</dbReference>
<dbReference type="GO" id="GO:0005524">
    <property type="term" value="F:ATP binding"/>
    <property type="evidence" value="ECO:0007669"/>
    <property type="project" value="UniProtKB-UniRule"/>
</dbReference>
<dbReference type="GO" id="GO:0005525">
    <property type="term" value="F:GTP binding"/>
    <property type="evidence" value="ECO:0007669"/>
    <property type="project" value="UniProtKB-UniRule"/>
</dbReference>
<dbReference type="Gene3D" id="3.40.50.300">
    <property type="entry name" value="P-loop containing nucleotide triphosphate hydrolases"/>
    <property type="match status" value="1"/>
</dbReference>
<dbReference type="HAMAP" id="MF_00636">
    <property type="entry name" value="RapZ_like"/>
    <property type="match status" value="1"/>
</dbReference>
<dbReference type="InterPro" id="IPR027417">
    <property type="entry name" value="P-loop_NTPase"/>
</dbReference>
<dbReference type="InterPro" id="IPR005337">
    <property type="entry name" value="RapZ-like"/>
</dbReference>
<dbReference type="InterPro" id="IPR053930">
    <property type="entry name" value="RapZ-like_N"/>
</dbReference>
<dbReference type="InterPro" id="IPR053931">
    <property type="entry name" value="RapZ_C"/>
</dbReference>
<dbReference type="NCBIfam" id="NF003828">
    <property type="entry name" value="PRK05416.1"/>
    <property type="match status" value="1"/>
</dbReference>
<dbReference type="PANTHER" id="PTHR30448">
    <property type="entry name" value="RNASE ADAPTER PROTEIN RAPZ"/>
    <property type="match status" value="1"/>
</dbReference>
<dbReference type="PANTHER" id="PTHR30448:SF0">
    <property type="entry name" value="RNASE ADAPTER PROTEIN RAPZ"/>
    <property type="match status" value="1"/>
</dbReference>
<dbReference type="Pfam" id="PF22740">
    <property type="entry name" value="PapZ_C"/>
    <property type="match status" value="1"/>
</dbReference>
<dbReference type="Pfam" id="PF03668">
    <property type="entry name" value="RapZ-like_N"/>
    <property type="match status" value="1"/>
</dbReference>
<dbReference type="PIRSF" id="PIRSF005052">
    <property type="entry name" value="P-loopkin"/>
    <property type="match status" value="1"/>
</dbReference>
<dbReference type="SUPFAM" id="SSF52540">
    <property type="entry name" value="P-loop containing nucleoside triphosphate hydrolases"/>
    <property type="match status" value="1"/>
</dbReference>
<name>Y1834_CALS4</name>
<protein>
    <recommendedName>
        <fullName evidence="1">Nucleotide-binding protein TTE1834</fullName>
    </recommendedName>
</protein>
<keyword id="KW-0067">ATP-binding</keyword>
<keyword id="KW-0342">GTP-binding</keyword>
<keyword id="KW-0547">Nucleotide-binding</keyword>
<keyword id="KW-1185">Reference proteome</keyword>
<comment type="function">
    <text evidence="1">Displays ATPase and GTPase activities.</text>
</comment>
<comment type="similarity">
    <text evidence="1">Belongs to the RapZ-like family.</text>
</comment>
<feature type="chain" id="PRO_0000107782" description="Nucleotide-binding protein TTE1834">
    <location>
        <begin position="1"/>
        <end position="284"/>
    </location>
</feature>
<feature type="binding site" evidence="1">
    <location>
        <begin position="8"/>
        <end position="15"/>
    </location>
    <ligand>
        <name>ATP</name>
        <dbReference type="ChEBI" id="CHEBI:30616"/>
    </ligand>
</feature>
<feature type="binding site" evidence="1">
    <location>
        <begin position="58"/>
        <end position="61"/>
    </location>
    <ligand>
        <name>GTP</name>
        <dbReference type="ChEBI" id="CHEBI:37565"/>
    </ligand>
</feature>
<sequence length="284" mass="32673">MRFVIITGLSGAGKTQALKAMEDMGFFCIDNFPPALIPKLADLFYQSKNIDKVALGMDLRGGQFFEDIYSSLDFLKKNNYDYEIVFLEASDEVLIKRFKETRRRHPLSEEGRIVDGINEERKRLSDIRKIANYIIDTSNLTSSQLKEELSNIFLKGKKFKGIIIDVMSFGYKYGIPLEADLVFDVRFLPNPFYIDELRPLTGNDEKVKEYVMKWEEAKEFLKKLGDMIKFLIPYYVREGKSQLVIAIGCTGGKHRSVAIANALYDLLKKEDYSVVVNHRDIGEE</sequence>
<gene>
    <name type="ordered locus">TTE1834</name>
</gene>
<evidence type="ECO:0000255" key="1">
    <source>
        <dbReference type="HAMAP-Rule" id="MF_00636"/>
    </source>
</evidence>
<organism>
    <name type="scientific">Caldanaerobacter subterraneus subsp. tengcongensis (strain DSM 15242 / JCM 11007 / NBRC 100824 / MB4)</name>
    <name type="common">Thermoanaerobacter tengcongensis</name>
    <dbReference type="NCBI Taxonomy" id="273068"/>
    <lineage>
        <taxon>Bacteria</taxon>
        <taxon>Bacillati</taxon>
        <taxon>Bacillota</taxon>
        <taxon>Clostridia</taxon>
        <taxon>Thermoanaerobacterales</taxon>
        <taxon>Thermoanaerobacteraceae</taxon>
        <taxon>Caldanaerobacter</taxon>
    </lineage>
</organism>
<reference key="1">
    <citation type="journal article" date="2002" name="Genome Res.">
        <title>A complete sequence of the T. tengcongensis genome.</title>
        <authorList>
            <person name="Bao Q."/>
            <person name="Tian Y."/>
            <person name="Li W."/>
            <person name="Xu Z."/>
            <person name="Xuan Z."/>
            <person name="Hu S."/>
            <person name="Dong W."/>
            <person name="Yang J."/>
            <person name="Chen Y."/>
            <person name="Xue Y."/>
            <person name="Xu Y."/>
            <person name="Lai X."/>
            <person name="Huang L."/>
            <person name="Dong X."/>
            <person name="Ma Y."/>
            <person name="Ling L."/>
            <person name="Tan H."/>
            <person name="Chen R."/>
            <person name="Wang J."/>
            <person name="Yu J."/>
            <person name="Yang H."/>
        </authorList>
    </citation>
    <scope>NUCLEOTIDE SEQUENCE [LARGE SCALE GENOMIC DNA]</scope>
    <source>
        <strain>DSM 15242 / JCM 11007 / NBRC 100824 / MB4</strain>
    </source>
</reference>
<proteinExistence type="inferred from homology"/>
<accession>Q8R8Z8</accession>